<name>WZYE_ERWT9</name>
<proteinExistence type="inferred from homology"/>
<gene>
    <name evidence="1" type="primary">wzyE</name>
    <name type="ordered locus">ETA_02070</name>
</gene>
<feature type="chain" id="PRO_1000200202" description="Probable ECA polymerase">
    <location>
        <begin position="1"/>
        <end position="457"/>
    </location>
</feature>
<feature type="transmembrane region" description="Helical" evidence="1">
    <location>
        <begin position="3"/>
        <end position="23"/>
    </location>
</feature>
<feature type="transmembrane region" description="Helical" evidence="1">
    <location>
        <begin position="41"/>
        <end position="61"/>
    </location>
</feature>
<feature type="transmembrane region" description="Helical" evidence="1">
    <location>
        <begin position="65"/>
        <end position="85"/>
    </location>
</feature>
<feature type="transmembrane region" description="Helical" evidence="1">
    <location>
        <begin position="118"/>
        <end position="138"/>
    </location>
</feature>
<feature type="transmembrane region" description="Helical" evidence="1">
    <location>
        <begin position="154"/>
        <end position="174"/>
    </location>
</feature>
<feature type="transmembrane region" description="Helical" evidence="1">
    <location>
        <begin position="181"/>
        <end position="201"/>
    </location>
</feature>
<feature type="transmembrane region" description="Helical" evidence="1">
    <location>
        <begin position="206"/>
        <end position="226"/>
    </location>
</feature>
<feature type="transmembrane region" description="Helical" evidence="1">
    <location>
        <begin position="227"/>
        <end position="247"/>
    </location>
</feature>
<feature type="transmembrane region" description="Helical" evidence="1">
    <location>
        <begin position="340"/>
        <end position="360"/>
    </location>
</feature>
<feature type="transmembrane region" description="Helical" evidence="1">
    <location>
        <begin position="377"/>
        <end position="397"/>
    </location>
</feature>
<feature type="transmembrane region" description="Helical" evidence="1">
    <location>
        <begin position="408"/>
        <end position="428"/>
    </location>
</feature>
<comment type="function">
    <text evidence="1">Probably involved in the polymerization of enterobacterial common antigen (ECA) trisaccharide repeat units.</text>
</comment>
<comment type="pathway">
    <text evidence="1">Bacterial outer membrane biogenesis; enterobacterial common antigen biosynthesis.</text>
</comment>
<comment type="subunit">
    <text evidence="1">Probably part of a complex composed of WzxE, WzyE and WzzE.</text>
</comment>
<comment type="subcellular location">
    <subcellularLocation>
        <location evidence="1">Cell inner membrane</location>
        <topology evidence="1">Multi-pass membrane protein</topology>
    </subcellularLocation>
</comment>
<comment type="similarity">
    <text evidence="1">Belongs to the WzyE family.</text>
</comment>
<reference key="1">
    <citation type="journal article" date="2008" name="Environ. Microbiol.">
        <title>The genome of Erwinia tasmaniensis strain Et1/99, a non-pathogenic bacterium in the genus Erwinia.</title>
        <authorList>
            <person name="Kube M."/>
            <person name="Migdoll A.M."/>
            <person name="Mueller I."/>
            <person name="Kuhl H."/>
            <person name="Beck A."/>
            <person name="Reinhardt R."/>
            <person name="Geider K."/>
        </authorList>
    </citation>
    <scope>NUCLEOTIDE SEQUENCE [LARGE SCALE GENOMIC DNA]</scope>
    <source>
        <strain>DSM 17950 / CFBP 7177 / CIP 109463 / NCPPB 4357 / Et1/99</strain>
    </source>
</reference>
<protein>
    <recommendedName>
        <fullName evidence="1">Probable ECA polymerase</fullName>
    </recommendedName>
</protein>
<dbReference type="EMBL" id="CU468135">
    <property type="protein sequence ID" value="CAO95253.1"/>
    <property type="molecule type" value="Genomic_DNA"/>
</dbReference>
<dbReference type="RefSeq" id="WP_012439973.1">
    <property type="nucleotide sequence ID" value="NC_010694.1"/>
</dbReference>
<dbReference type="STRING" id="465817.ETA_02070"/>
<dbReference type="KEGG" id="eta:ETA_02070"/>
<dbReference type="eggNOG" id="ENOG502Z7MA">
    <property type="taxonomic scope" value="Bacteria"/>
</dbReference>
<dbReference type="HOGENOM" id="CLU_049711_0_0_6"/>
<dbReference type="OrthoDB" id="6415259at2"/>
<dbReference type="UniPathway" id="UPA00566"/>
<dbReference type="Proteomes" id="UP000001726">
    <property type="component" value="Chromosome"/>
</dbReference>
<dbReference type="GO" id="GO:0005886">
    <property type="term" value="C:plasma membrane"/>
    <property type="evidence" value="ECO:0007669"/>
    <property type="project" value="UniProtKB-SubCell"/>
</dbReference>
<dbReference type="GO" id="GO:0009246">
    <property type="term" value="P:enterobacterial common antigen biosynthetic process"/>
    <property type="evidence" value="ECO:0007669"/>
    <property type="project" value="UniProtKB-UniRule"/>
</dbReference>
<dbReference type="HAMAP" id="MF_01003">
    <property type="entry name" value="WzyE"/>
    <property type="match status" value="1"/>
</dbReference>
<dbReference type="InterPro" id="IPR010691">
    <property type="entry name" value="WzyE"/>
</dbReference>
<dbReference type="NCBIfam" id="NF002820">
    <property type="entry name" value="PRK02975.1"/>
    <property type="match status" value="1"/>
</dbReference>
<dbReference type="Pfam" id="PF06899">
    <property type="entry name" value="WzyE"/>
    <property type="match status" value="1"/>
</dbReference>
<sequence>MTLLQFAGLLLVWLVCGGFILTLTWREFRRVRFNFNVFFSMLFLLTFFFGFPLTCILVFGFDVEVVPAEYLLQALLSAGCFYAIYYVTYKTRLRTRHRAPSRPAFTINRIEAHLSWMIMALVALITVSVFFLHNGFLLFKLQKYSQIFSADVSGVALKRFFYFFIPAMLVVYFLQQNMRSWLLFLVGTVAFGLLTYAIVGGTRANIIIAFALFLFIGIIRGWITLWMLALAGVGAIVAMFWLALKRYNLDVSGSQAFYTFLYLTRDTFSPWENLGLLLQNYDRIDFQGLAPVWRDFYVFIPSWLWHERPSVVLNSANYFTWEVLDNHSGLAISPTLIGSLVVMGGALFIMLGAVMVGLIIKWFDWLYEKGRQEENPYKAAILQSFCFGAVFNMIVLAREGLDAFVSRVVFFCVIFAACVLVAKLLYWLLDSAGLVRARKGPACARSSLKHCFVGNDS</sequence>
<keyword id="KW-0997">Cell inner membrane</keyword>
<keyword id="KW-1003">Cell membrane</keyword>
<keyword id="KW-0472">Membrane</keyword>
<keyword id="KW-1185">Reference proteome</keyword>
<keyword id="KW-0812">Transmembrane</keyword>
<keyword id="KW-1133">Transmembrane helix</keyword>
<accession>B2VG51</accession>
<organism>
    <name type="scientific">Erwinia tasmaniensis (strain DSM 17950 / CFBP 7177 / CIP 109463 / NCPPB 4357 / Et1/99)</name>
    <dbReference type="NCBI Taxonomy" id="465817"/>
    <lineage>
        <taxon>Bacteria</taxon>
        <taxon>Pseudomonadati</taxon>
        <taxon>Pseudomonadota</taxon>
        <taxon>Gammaproteobacteria</taxon>
        <taxon>Enterobacterales</taxon>
        <taxon>Erwiniaceae</taxon>
        <taxon>Erwinia</taxon>
    </lineage>
</organism>
<evidence type="ECO:0000255" key="1">
    <source>
        <dbReference type="HAMAP-Rule" id="MF_01003"/>
    </source>
</evidence>